<accession>Q74Y23</accession>
<accession>Q8CZJ5</accession>
<name>CYSG_YERPE</name>
<organism>
    <name type="scientific">Yersinia pestis</name>
    <dbReference type="NCBI Taxonomy" id="632"/>
    <lineage>
        <taxon>Bacteria</taxon>
        <taxon>Pseudomonadati</taxon>
        <taxon>Pseudomonadota</taxon>
        <taxon>Gammaproteobacteria</taxon>
        <taxon>Enterobacterales</taxon>
        <taxon>Yersiniaceae</taxon>
        <taxon>Yersinia</taxon>
    </lineage>
</organism>
<reference key="1">
    <citation type="journal article" date="2001" name="Nature">
        <title>Genome sequence of Yersinia pestis, the causative agent of plague.</title>
        <authorList>
            <person name="Parkhill J."/>
            <person name="Wren B.W."/>
            <person name="Thomson N.R."/>
            <person name="Titball R.W."/>
            <person name="Holden M.T.G."/>
            <person name="Prentice M.B."/>
            <person name="Sebaihia M."/>
            <person name="James K.D."/>
            <person name="Churcher C.M."/>
            <person name="Mungall K.L."/>
            <person name="Baker S."/>
            <person name="Basham D."/>
            <person name="Bentley S.D."/>
            <person name="Brooks K."/>
            <person name="Cerdeno-Tarraga A.-M."/>
            <person name="Chillingworth T."/>
            <person name="Cronin A."/>
            <person name="Davies R.M."/>
            <person name="Davis P."/>
            <person name="Dougan G."/>
            <person name="Feltwell T."/>
            <person name="Hamlin N."/>
            <person name="Holroyd S."/>
            <person name="Jagels K."/>
            <person name="Karlyshev A.V."/>
            <person name="Leather S."/>
            <person name="Moule S."/>
            <person name="Oyston P.C.F."/>
            <person name="Quail M.A."/>
            <person name="Rutherford K.M."/>
            <person name="Simmonds M."/>
            <person name="Skelton J."/>
            <person name="Stevens K."/>
            <person name="Whitehead S."/>
            <person name="Barrell B.G."/>
        </authorList>
    </citation>
    <scope>NUCLEOTIDE SEQUENCE [LARGE SCALE GENOMIC DNA]</scope>
    <source>
        <strain>CO-92 / Biovar Orientalis</strain>
    </source>
</reference>
<reference key="2">
    <citation type="journal article" date="2002" name="J. Bacteriol.">
        <title>Genome sequence of Yersinia pestis KIM.</title>
        <authorList>
            <person name="Deng W."/>
            <person name="Burland V."/>
            <person name="Plunkett G. III"/>
            <person name="Boutin A."/>
            <person name="Mayhew G.F."/>
            <person name="Liss P."/>
            <person name="Perna N.T."/>
            <person name="Rose D.J."/>
            <person name="Mau B."/>
            <person name="Zhou S."/>
            <person name="Schwartz D.C."/>
            <person name="Fetherston J.D."/>
            <person name="Lindler L.E."/>
            <person name="Brubaker R.R."/>
            <person name="Plano G.V."/>
            <person name="Straley S.C."/>
            <person name="McDonough K.A."/>
            <person name="Nilles M.L."/>
            <person name="Matson J.S."/>
            <person name="Blattner F.R."/>
            <person name="Perry R.D."/>
        </authorList>
    </citation>
    <scope>NUCLEOTIDE SEQUENCE [LARGE SCALE GENOMIC DNA]</scope>
    <source>
        <strain>KIM10+ / Biovar Mediaevalis</strain>
    </source>
</reference>
<reference key="3">
    <citation type="journal article" date="2004" name="DNA Res.">
        <title>Complete genome sequence of Yersinia pestis strain 91001, an isolate avirulent to humans.</title>
        <authorList>
            <person name="Song Y."/>
            <person name="Tong Z."/>
            <person name="Wang J."/>
            <person name="Wang L."/>
            <person name="Guo Z."/>
            <person name="Han Y."/>
            <person name="Zhang J."/>
            <person name="Pei D."/>
            <person name="Zhou D."/>
            <person name="Qin H."/>
            <person name="Pang X."/>
            <person name="Han Y."/>
            <person name="Zhai J."/>
            <person name="Li M."/>
            <person name="Cui B."/>
            <person name="Qi Z."/>
            <person name="Jin L."/>
            <person name="Dai R."/>
            <person name="Chen F."/>
            <person name="Li S."/>
            <person name="Ye C."/>
            <person name="Du Z."/>
            <person name="Lin W."/>
            <person name="Wang J."/>
            <person name="Yu J."/>
            <person name="Yang H."/>
            <person name="Wang J."/>
            <person name="Huang P."/>
            <person name="Yang R."/>
        </authorList>
    </citation>
    <scope>NUCLEOTIDE SEQUENCE [LARGE SCALE GENOMIC DNA]</scope>
    <source>
        <strain>91001 / Biovar Mediaevalis</strain>
    </source>
</reference>
<proteinExistence type="inferred from homology"/>
<sequence length="470" mass="51664">MDYFPIFCQLQHKACLLVGGGEIAERKARLLLDAGALVTVNACEFTPQFHHWADQGQLSLISGEFVPELLADKWLVIAATDQLSVNALVYQSANQQRIFCNVVDDPKRTSFIMPSIIDRSPIMIAVSSGGKAPVLARLLREKLEALLPQHLGQLAGNLRQRVKQHFTVMTERRRFWEKLLTHDRLAQSLANNDHVQADQHVEQLFSAPLTDRGEVVLVGAGPGDAGLLTLKGLQQIQQADVVVYDRLVSDEVMNLVRRDAERIFVGKQSGHHCVPQEQINQILLQQAQSGKRVVRLKGGDPFIFGRGGEELEELAGYGIPFSVVPGITAASGCSAYSGIPLTHRDHAQSVRLVTGHAKKEGQLDWANLAAEKQTLVFYMGLSQAGEIQQQLIQHGMPATTQVALVENGTSRHQRVVSGELSQLALLSQQVSSPSLIIVGSVVSLREKLNWFSSRHHDDQPKVTECVAHVG</sequence>
<feature type="chain" id="PRO_0000330572" description="Siroheme synthase">
    <location>
        <begin position="1"/>
        <end position="470"/>
    </location>
</feature>
<feature type="region of interest" description="Precorrin-2 dehydrogenase /sirohydrochlorin ferrochelatase" evidence="1">
    <location>
        <begin position="1"/>
        <end position="201"/>
    </location>
</feature>
<feature type="region of interest" description="Uroporphyrinogen-III C-methyltransferase" evidence="1">
    <location>
        <begin position="213"/>
        <end position="470"/>
    </location>
</feature>
<feature type="active site" description="Proton acceptor" evidence="1">
    <location>
        <position position="245"/>
    </location>
</feature>
<feature type="active site" description="Proton donor" evidence="1">
    <location>
        <position position="267"/>
    </location>
</feature>
<feature type="binding site" evidence="1">
    <location>
        <begin position="22"/>
        <end position="23"/>
    </location>
    <ligand>
        <name>NAD(+)</name>
        <dbReference type="ChEBI" id="CHEBI:57540"/>
    </ligand>
</feature>
<feature type="binding site" evidence="1">
    <location>
        <begin position="43"/>
        <end position="44"/>
    </location>
    <ligand>
        <name>NAD(+)</name>
        <dbReference type="ChEBI" id="CHEBI:57540"/>
    </ligand>
</feature>
<feature type="binding site" evidence="1">
    <location>
        <position position="222"/>
    </location>
    <ligand>
        <name>S-adenosyl-L-methionine</name>
        <dbReference type="ChEBI" id="CHEBI:59789"/>
    </ligand>
</feature>
<feature type="binding site" evidence="1">
    <location>
        <begin position="298"/>
        <end position="300"/>
    </location>
    <ligand>
        <name>S-adenosyl-L-methionine</name>
        <dbReference type="ChEBI" id="CHEBI:59789"/>
    </ligand>
</feature>
<feature type="binding site" evidence="1">
    <location>
        <position position="303"/>
    </location>
    <ligand>
        <name>S-adenosyl-L-methionine</name>
        <dbReference type="ChEBI" id="CHEBI:59789"/>
    </ligand>
</feature>
<feature type="binding site" evidence="1">
    <location>
        <begin position="328"/>
        <end position="329"/>
    </location>
    <ligand>
        <name>S-adenosyl-L-methionine</name>
        <dbReference type="ChEBI" id="CHEBI:59789"/>
    </ligand>
</feature>
<feature type="binding site" evidence="1">
    <location>
        <position position="379"/>
    </location>
    <ligand>
        <name>S-adenosyl-L-methionine</name>
        <dbReference type="ChEBI" id="CHEBI:59789"/>
    </ligand>
</feature>
<feature type="binding site" evidence="1">
    <location>
        <position position="408"/>
    </location>
    <ligand>
        <name>S-adenosyl-L-methionine</name>
        <dbReference type="ChEBI" id="CHEBI:59789"/>
    </ligand>
</feature>
<feature type="modified residue" description="Phosphoserine" evidence="1">
    <location>
        <position position="128"/>
    </location>
</feature>
<comment type="function">
    <text evidence="1">Multifunctional enzyme that catalyzes the SAM-dependent methylations of uroporphyrinogen III at position C-2 and C-7 to form precorrin-2 via precorrin-1. Then it catalyzes the NAD-dependent ring dehydrogenation of precorrin-2 to yield sirohydrochlorin. Finally, it catalyzes the ferrochelation of sirohydrochlorin to yield siroheme.</text>
</comment>
<comment type="catalytic activity">
    <reaction evidence="1">
        <text>uroporphyrinogen III + 2 S-adenosyl-L-methionine = precorrin-2 + 2 S-adenosyl-L-homocysteine + H(+)</text>
        <dbReference type="Rhea" id="RHEA:32459"/>
        <dbReference type="ChEBI" id="CHEBI:15378"/>
        <dbReference type="ChEBI" id="CHEBI:57308"/>
        <dbReference type="ChEBI" id="CHEBI:57856"/>
        <dbReference type="ChEBI" id="CHEBI:58827"/>
        <dbReference type="ChEBI" id="CHEBI:59789"/>
        <dbReference type="EC" id="2.1.1.107"/>
    </reaction>
</comment>
<comment type="catalytic activity">
    <reaction evidence="1">
        <text>precorrin-2 + NAD(+) = sirohydrochlorin + NADH + 2 H(+)</text>
        <dbReference type="Rhea" id="RHEA:15613"/>
        <dbReference type="ChEBI" id="CHEBI:15378"/>
        <dbReference type="ChEBI" id="CHEBI:57540"/>
        <dbReference type="ChEBI" id="CHEBI:57945"/>
        <dbReference type="ChEBI" id="CHEBI:58351"/>
        <dbReference type="ChEBI" id="CHEBI:58827"/>
        <dbReference type="EC" id="1.3.1.76"/>
    </reaction>
</comment>
<comment type="catalytic activity">
    <reaction evidence="1">
        <text>siroheme + 2 H(+) = sirohydrochlorin + Fe(2+)</text>
        <dbReference type="Rhea" id="RHEA:24360"/>
        <dbReference type="ChEBI" id="CHEBI:15378"/>
        <dbReference type="ChEBI" id="CHEBI:29033"/>
        <dbReference type="ChEBI" id="CHEBI:58351"/>
        <dbReference type="ChEBI" id="CHEBI:60052"/>
        <dbReference type="EC" id="4.99.1.4"/>
    </reaction>
</comment>
<comment type="pathway">
    <text evidence="1">Cofactor biosynthesis; adenosylcobalamin biosynthesis; precorrin-2 from uroporphyrinogen III: step 1/1.</text>
</comment>
<comment type="pathway">
    <text evidence="1">Cofactor biosynthesis; adenosylcobalamin biosynthesis; sirohydrochlorin from precorrin-2: step 1/1.</text>
</comment>
<comment type="pathway">
    <text evidence="1">Porphyrin-containing compound metabolism; siroheme biosynthesis; precorrin-2 from uroporphyrinogen III: step 1/1.</text>
</comment>
<comment type="pathway">
    <text evidence="1">Porphyrin-containing compound metabolism; siroheme biosynthesis; siroheme from sirohydrochlorin: step 1/1.</text>
</comment>
<comment type="pathway">
    <text evidence="1">Porphyrin-containing compound metabolism; siroheme biosynthesis; sirohydrochlorin from precorrin-2: step 1/1.</text>
</comment>
<comment type="similarity">
    <text evidence="1">In the N-terminal section; belongs to the precorrin-2 dehydrogenase / sirohydrochlorin ferrochelatase family.</text>
</comment>
<comment type="similarity">
    <text evidence="1">In the C-terminal section; belongs to the precorrin methyltransferase family.</text>
</comment>
<comment type="sequence caution" evidence="2">
    <conflict type="erroneous initiation">
        <sequence resource="EMBL-CDS" id="AAM87485"/>
    </conflict>
    <text>Extended N-terminus.</text>
</comment>
<dbReference type="EC" id="2.1.1.107" evidence="1"/>
<dbReference type="EC" id="1.3.1.76" evidence="1"/>
<dbReference type="EC" id="4.99.1.4" evidence="1"/>
<dbReference type="EMBL" id="AL590842">
    <property type="protein sequence ID" value="CAL18844.1"/>
    <property type="molecule type" value="Genomic_DNA"/>
</dbReference>
<dbReference type="EMBL" id="AE009952">
    <property type="protein sequence ID" value="AAM87485.1"/>
    <property type="status" value="ALT_INIT"/>
    <property type="molecule type" value="Genomic_DNA"/>
</dbReference>
<dbReference type="EMBL" id="AE017042">
    <property type="protein sequence ID" value="AAS60438.1"/>
    <property type="molecule type" value="Genomic_DNA"/>
</dbReference>
<dbReference type="PIR" id="AC0020">
    <property type="entry name" value="AC0020"/>
</dbReference>
<dbReference type="RefSeq" id="WP_002208890.1">
    <property type="nucleotide sequence ID" value="NZ_WUCM01000004.1"/>
</dbReference>
<dbReference type="RefSeq" id="YP_002345244.1">
    <property type="nucleotide sequence ID" value="NC_003143.1"/>
</dbReference>
<dbReference type="SMR" id="Q74Y23"/>
<dbReference type="STRING" id="214092.YPO0158"/>
<dbReference type="PaxDb" id="214092-YPO0158"/>
<dbReference type="EnsemblBacteria" id="AAS60438">
    <property type="protein sequence ID" value="AAS60438"/>
    <property type="gene ID" value="YP_0160"/>
</dbReference>
<dbReference type="GeneID" id="57974443"/>
<dbReference type="KEGG" id="ype:YPO0158"/>
<dbReference type="KEGG" id="ypk:y3941"/>
<dbReference type="KEGG" id="ypm:YP_0160"/>
<dbReference type="PATRIC" id="fig|214092.21.peg.386"/>
<dbReference type="eggNOG" id="COG0007">
    <property type="taxonomic scope" value="Bacteria"/>
</dbReference>
<dbReference type="eggNOG" id="COG1648">
    <property type="taxonomic scope" value="Bacteria"/>
</dbReference>
<dbReference type="HOGENOM" id="CLU_011276_2_0_6"/>
<dbReference type="OMA" id="IPYGRFM"/>
<dbReference type="OrthoDB" id="9815856at2"/>
<dbReference type="UniPathway" id="UPA00148">
    <property type="reaction ID" value="UER00211"/>
</dbReference>
<dbReference type="UniPathway" id="UPA00148">
    <property type="reaction ID" value="UER00222"/>
</dbReference>
<dbReference type="UniPathway" id="UPA00262">
    <property type="reaction ID" value="UER00211"/>
</dbReference>
<dbReference type="UniPathway" id="UPA00262">
    <property type="reaction ID" value="UER00222"/>
</dbReference>
<dbReference type="UniPathway" id="UPA00262">
    <property type="reaction ID" value="UER00376"/>
</dbReference>
<dbReference type="Proteomes" id="UP000000815">
    <property type="component" value="Chromosome"/>
</dbReference>
<dbReference type="Proteomes" id="UP000001019">
    <property type="component" value="Chromosome"/>
</dbReference>
<dbReference type="Proteomes" id="UP000002490">
    <property type="component" value="Chromosome"/>
</dbReference>
<dbReference type="GO" id="GO:0051287">
    <property type="term" value="F:NAD binding"/>
    <property type="evidence" value="ECO:0007669"/>
    <property type="project" value="InterPro"/>
</dbReference>
<dbReference type="GO" id="GO:0043115">
    <property type="term" value="F:precorrin-2 dehydrogenase activity"/>
    <property type="evidence" value="ECO:0007669"/>
    <property type="project" value="UniProtKB-UniRule"/>
</dbReference>
<dbReference type="GO" id="GO:0051266">
    <property type="term" value="F:sirohydrochlorin ferrochelatase activity"/>
    <property type="evidence" value="ECO:0007669"/>
    <property type="project" value="UniProtKB-EC"/>
</dbReference>
<dbReference type="GO" id="GO:0004851">
    <property type="term" value="F:uroporphyrin-III C-methyltransferase activity"/>
    <property type="evidence" value="ECO:0000318"/>
    <property type="project" value="GO_Central"/>
</dbReference>
<dbReference type="GO" id="GO:0009236">
    <property type="term" value="P:cobalamin biosynthetic process"/>
    <property type="evidence" value="ECO:0007669"/>
    <property type="project" value="UniProtKB-UniRule"/>
</dbReference>
<dbReference type="GO" id="GO:0032259">
    <property type="term" value="P:methylation"/>
    <property type="evidence" value="ECO:0007669"/>
    <property type="project" value="UniProtKB-KW"/>
</dbReference>
<dbReference type="GO" id="GO:0019354">
    <property type="term" value="P:siroheme biosynthetic process"/>
    <property type="evidence" value="ECO:0000318"/>
    <property type="project" value="GO_Central"/>
</dbReference>
<dbReference type="CDD" id="cd11642">
    <property type="entry name" value="SUMT"/>
    <property type="match status" value="1"/>
</dbReference>
<dbReference type="FunFam" id="3.30.160.110:FF:000001">
    <property type="entry name" value="Siroheme synthase"/>
    <property type="match status" value="1"/>
</dbReference>
<dbReference type="FunFam" id="3.30.950.10:FF:000001">
    <property type="entry name" value="Siroheme synthase"/>
    <property type="match status" value="1"/>
</dbReference>
<dbReference type="FunFam" id="3.40.1010.10:FF:000001">
    <property type="entry name" value="Siroheme synthase"/>
    <property type="match status" value="1"/>
</dbReference>
<dbReference type="FunFam" id="3.40.50.720:FF:000092">
    <property type="entry name" value="Siroheme synthase"/>
    <property type="match status" value="1"/>
</dbReference>
<dbReference type="Gene3D" id="3.40.1010.10">
    <property type="entry name" value="Cobalt-precorrin-4 Transmethylase, Domain 1"/>
    <property type="match status" value="1"/>
</dbReference>
<dbReference type="Gene3D" id="3.30.950.10">
    <property type="entry name" value="Methyltransferase, Cobalt-precorrin-4 Transmethylase, Domain 2"/>
    <property type="match status" value="1"/>
</dbReference>
<dbReference type="Gene3D" id="3.40.50.720">
    <property type="entry name" value="NAD(P)-binding Rossmann-like Domain"/>
    <property type="match status" value="1"/>
</dbReference>
<dbReference type="Gene3D" id="1.10.8.210">
    <property type="entry name" value="Sirohaem synthase, dimerisation domain"/>
    <property type="match status" value="1"/>
</dbReference>
<dbReference type="Gene3D" id="3.30.160.110">
    <property type="entry name" value="Siroheme synthase, domain 2"/>
    <property type="match status" value="1"/>
</dbReference>
<dbReference type="HAMAP" id="MF_01646">
    <property type="entry name" value="Siroheme_synth"/>
    <property type="match status" value="1"/>
</dbReference>
<dbReference type="InterPro" id="IPR000878">
    <property type="entry name" value="4pyrrol_Mease"/>
</dbReference>
<dbReference type="InterPro" id="IPR035996">
    <property type="entry name" value="4pyrrol_Methylase_sf"/>
</dbReference>
<dbReference type="InterPro" id="IPR014777">
    <property type="entry name" value="4pyrrole_Mease_sub1"/>
</dbReference>
<dbReference type="InterPro" id="IPR014776">
    <property type="entry name" value="4pyrrole_Mease_sub2"/>
</dbReference>
<dbReference type="InterPro" id="IPR006366">
    <property type="entry name" value="CobA/CysG_C"/>
</dbReference>
<dbReference type="InterPro" id="IPR036291">
    <property type="entry name" value="NAD(P)-bd_dom_sf"/>
</dbReference>
<dbReference type="InterPro" id="IPR050161">
    <property type="entry name" value="Siro_Cobalamin_biosynth"/>
</dbReference>
<dbReference type="InterPro" id="IPR037115">
    <property type="entry name" value="Sirohaem_synt_dimer_dom_sf"/>
</dbReference>
<dbReference type="InterPro" id="IPR012409">
    <property type="entry name" value="Sirohaem_synth"/>
</dbReference>
<dbReference type="InterPro" id="IPR028281">
    <property type="entry name" value="Sirohaem_synthase_central"/>
</dbReference>
<dbReference type="InterPro" id="IPR019478">
    <property type="entry name" value="Sirohaem_synthase_dimer_dom"/>
</dbReference>
<dbReference type="InterPro" id="IPR006367">
    <property type="entry name" value="Sirohaem_synthase_N"/>
</dbReference>
<dbReference type="InterPro" id="IPR003043">
    <property type="entry name" value="Uropor_MeTrfase_CS"/>
</dbReference>
<dbReference type="NCBIfam" id="TIGR01469">
    <property type="entry name" value="cobA_cysG_Cterm"/>
    <property type="match status" value="1"/>
</dbReference>
<dbReference type="NCBIfam" id="TIGR01470">
    <property type="entry name" value="cysG_Nterm"/>
    <property type="match status" value="1"/>
</dbReference>
<dbReference type="NCBIfam" id="NF004790">
    <property type="entry name" value="PRK06136.1"/>
    <property type="match status" value="1"/>
</dbReference>
<dbReference type="NCBIfam" id="NF007922">
    <property type="entry name" value="PRK10637.1"/>
    <property type="match status" value="1"/>
</dbReference>
<dbReference type="PANTHER" id="PTHR45790:SF1">
    <property type="entry name" value="SIROHEME SYNTHASE"/>
    <property type="match status" value="1"/>
</dbReference>
<dbReference type="PANTHER" id="PTHR45790">
    <property type="entry name" value="SIROHEME SYNTHASE-RELATED"/>
    <property type="match status" value="1"/>
</dbReference>
<dbReference type="Pfam" id="PF10414">
    <property type="entry name" value="CysG_dimeriser"/>
    <property type="match status" value="1"/>
</dbReference>
<dbReference type="Pfam" id="PF13241">
    <property type="entry name" value="NAD_binding_7"/>
    <property type="match status" value="1"/>
</dbReference>
<dbReference type="Pfam" id="PF14824">
    <property type="entry name" value="Sirohm_synth_M"/>
    <property type="match status" value="1"/>
</dbReference>
<dbReference type="Pfam" id="PF00590">
    <property type="entry name" value="TP_methylase"/>
    <property type="match status" value="1"/>
</dbReference>
<dbReference type="PIRSF" id="PIRSF036426">
    <property type="entry name" value="Sirohaem_synth"/>
    <property type="match status" value="1"/>
</dbReference>
<dbReference type="SUPFAM" id="SSF51735">
    <property type="entry name" value="NAD(P)-binding Rossmann-fold domains"/>
    <property type="match status" value="1"/>
</dbReference>
<dbReference type="SUPFAM" id="SSF75615">
    <property type="entry name" value="Siroheme synthase middle domains-like"/>
    <property type="match status" value="1"/>
</dbReference>
<dbReference type="SUPFAM" id="SSF53790">
    <property type="entry name" value="Tetrapyrrole methylase"/>
    <property type="match status" value="1"/>
</dbReference>
<dbReference type="PROSITE" id="PS00839">
    <property type="entry name" value="SUMT_1"/>
    <property type="match status" value="1"/>
</dbReference>
<dbReference type="PROSITE" id="PS00840">
    <property type="entry name" value="SUMT_2"/>
    <property type="match status" value="1"/>
</dbReference>
<gene>
    <name evidence="1" type="primary">cysG</name>
    <name type="ordered locus">YPO0158</name>
    <name type="ordered locus">y3941</name>
    <name type="ordered locus">YP_0160</name>
</gene>
<protein>
    <recommendedName>
        <fullName evidence="1">Siroheme synthase</fullName>
    </recommendedName>
    <domain>
        <recommendedName>
            <fullName evidence="1">Uroporphyrinogen-III C-methyltransferase</fullName>
            <shortName evidence="1">Urogen III methylase</shortName>
            <ecNumber evidence="1">2.1.1.107</ecNumber>
        </recommendedName>
        <alternativeName>
            <fullName evidence="1">SUMT</fullName>
        </alternativeName>
        <alternativeName>
            <fullName evidence="1">Uroporphyrinogen III methylase</fullName>
            <shortName evidence="1">UROM</shortName>
        </alternativeName>
    </domain>
    <domain>
        <recommendedName>
            <fullName evidence="1">Precorrin-2 dehydrogenase</fullName>
            <ecNumber evidence="1">1.3.1.76</ecNumber>
        </recommendedName>
    </domain>
    <domain>
        <recommendedName>
            <fullName evidence="1">Sirohydrochlorin ferrochelatase</fullName>
            <ecNumber evidence="1">4.99.1.4</ecNumber>
        </recommendedName>
    </domain>
</protein>
<keyword id="KW-0169">Cobalamin biosynthesis</keyword>
<keyword id="KW-0456">Lyase</keyword>
<keyword id="KW-0489">Methyltransferase</keyword>
<keyword id="KW-0511">Multifunctional enzyme</keyword>
<keyword id="KW-0520">NAD</keyword>
<keyword id="KW-0560">Oxidoreductase</keyword>
<keyword id="KW-0597">Phosphoprotein</keyword>
<keyword id="KW-0627">Porphyrin biosynthesis</keyword>
<keyword id="KW-1185">Reference proteome</keyword>
<keyword id="KW-0949">S-adenosyl-L-methionine</keyword>
<keyword id="KW-0808">Transferase</keyword>
<evidence type="ECO:0000255" key="1">
    <source>
        <dbReference type="HAMAP-Rule" id="MF_01646"/>
    </source>
</evidence>
<evidence type="ECO:0000305" key="2"/>